<name>AGT2_PONAB</name>
<dbReference type="EC" id="2.6.1.44" evidence="3"/>
<dbReference type="EC" id="2.6.1.40" evidence="4"/>
<dbReference type="EC" id="2.6.1.18" evidence="3"/>
<dbReference type="EMBL" id="CR857258">
    <property type="protein sequence ID" value="CAH89554.1"/>
    <property type="molecule type" value="mRNA"/>
</dbReference>
<dbReference type="RefSeq" id="NP_001124677.1">
    <property type="nucleotide sequence ID" value="NM_001131205.2"/>
</dbReference>
<dbReference type="SMR" id="Q5RFA3"/>
<dbReference type="FunCoup" id="Q5RFA3">
    <property type="interactions" value="273"/>
</dbReference>
<dbReference type="STRING" id="9601.ENSPPYP00000017192"/>
<dbReference type="GeneID" id="100171524"/>
<dbReference type="KEGG" id="pon:100171524"/>
<dbReference type="CTD" id="64902"/>
<dbReference type="eggNOG" id="KOG1404">
    <property type="taxonomic scope" value="Eukaryota"/>
</dbReference>
<dbReference type="InParanoid" id="Q5RFA3"/>
<dbReference type="OrthoDB" id="10261433at2759"/>
<dbReference type="Proteomes" id="UP000001595">
    <property type="component" value="Unplaced"/>
</dbReference>
<dbReference type="GO" id="GO:0005759">
    <property type="term" value="C:mitochondrial matrix"/>
    <property type="evidence" value="ECO:0007669"/>
    <property type="project" value="UniProtKB-ARBA"/>
</dbReference>
<dbReference type="GO" id="GO:0005739">
    <property type="term" value="C:mitochondrion"/>
    <property type="evidence" value="ECO:0000250"/>
    <property type="project" value="UniProtKB"/>
</dbReference>
<dbReference type="GO" id="GO:0047305">
    <property type="term" value="F:(R)-3-amino-2-methylpropionate-pyruvate transaminase activity"/>
    <property type="evidence" value="ECO:0000250"/>
    <property type="project" value="UniProtKB"/>
</dbReference>
<dbReference type="GO" id="GO:0008453">
    <property type="term" value="F:alanine-glyoxylate transaminase activity"/>
    <property type="evidence" value="ECO:0000250"/>
    <property type="project" value="UniProtKB"/>
</dbReference>
<dbReference type="GO" id="GO:0016223">
    <property type="term" value="F:beta-alanine:pyruvate transaminase activity"/>
    <property type="evidence" value="ECO:0007669"/>
    <property type="project" value="RHEA"/>
</dbReference>
<dbReference type="GO" id="GO:0030170">
    <property type="term" value="F:pyridoxal phosphate binding"/>
    <property type="evidence" value="ECO:0007669"/>
    <property type="project" value="InterPro"/>
</dbReference>
<dbReference type="GO" id="GO:0009436">
    <property type="term" value="P:glyoxylate catabolic process"/>
    <property type="evidence" value="ECO:0007669"/>
    <property type="project" value="TreeGrafter"/>
</dbReference>
<dbReference type="GO" id="GO:0019481">
    <property type="term" value="P:L-alanine catabolic process, by transamination"/>
    <property type="evidence" value="ECO:0007669"/>
    <property type="project" value="TreeGrafter"/>
</dbReference>
<dbReference type="GO" id="GO:2001299">
    <property type="term" value="P:N(omega),N(omega)-dimethyl-L-arginine catabolic process"/>
    <property type="evidence" value="ECO:0000250"/>
    <property type="project" value="UniProtKB"/>
</dbReference>
<dbReference type="CDD" id="cd00610">
    <property type="entry name" value="OAT_like"/>
    <property type="match status" value="1"/>
</dbReference>
<dbReference type="FunFam" id="3.40.640.10:FF:000055">
    <property type="entry name" value="Alanine--glyoxylate aminotransferase 2, mitochondrial"/>
    <property type="match status" value="1"/>
</dbReference>
<dbReference type="FunFam" id="3.90.1150.10:FF:000105">
    <property type="entry name" value="alanine--glyoxylate aminotransferase 2, mitochondrial isoform X3"/>
    <property type="match status" value="1"/>
</dbReference>
<dbReference type="Gene3D" id="3.90.1150.10">
    <property type="entry name" value="Aspartate Aminotransferase, domain 1"/>
    <property type="match status" value="1"/>
</dbReference>
<dbReference type="Gene3D" id="3.40.640.10">
    <property type="entry name" value="Type I PLP-dependent aspartate aminotransferase-like (Major domain)"/>
    <property type="match status" value="1"/>
</dbReference>
<dbReference type="InterPro" id="IPR005814">
    <property type="entry name" value="Aminotrans_3"/>
</dbReference>
<dbReference type="InterPro" id="IPR049704">
    <property type="entry name" value="Aminotrans_3_PPA_site"/>
</dbReference>
<dbReference type="InterPro" id="IPR015424">
    <property type="entry name" value="PyrdxlP-dep_Trfase"/>
</dbReference>
<dbReference type="InterPro" id="IPR015421">
    <property type="entry name" value="PyrdxlP-dep_Trfase_major"/>
</dbReference>
<dbReference type="InterPro" id="IPR015422">
    <property type="entry name" value="PyrdxlP-dep_Trfase_small"/>
</dbReference>
<dbReference type="PANTHER" id="PTHR45688">
    <property type="match status" value="1"/>
</dbReference>
<dbReference type="PANTHER" id="PTHR45688:SF3">
    <property type="entry name" value="ALANINE--GLYOXYLATE AMINOTRANSFERASE 2, MITOCHONDRIAL"/>
    <property type="match status" value="1"/>
</dbReference>
<dbReference type="Pfam" id="PF00202">
    <property type="entry name" value="Aminotran_3"/>
    <property type="match status" value="1"/>
</dbReference>
<dbReference type="PIRSF" id="PIRSF000521">
    <property type="entry name" value="Transaminase_4ab_Lys_Orn"/>
    <property type="match status" value="1"/>
</dbReference>
<dbReference type="SUPFAM" id="SSF53383">
    <property type="entry name" value="PLP-dependent transferases"/>
    <property type="match status" value="1"/>
</dbReference>
<dbReference type="PROSITE" id="PS00600">
    <property type="entry name" value="AA_TRANSFER_CLASS_3"/>
    <property type="match status" value="1"/>
</dbReference>
<protein>
    <recommendedName>
        <fullName>Alanine--glyoxylate aminotransferase 2, mitochondrial</fullName>
        <shortName>AGT 2</shortName>
        <ecNumber evidence="3">2.6.1.44</ecNumber>
    </recommendedName>
    <alternativeName>
        <fullName>(R)-3-amino-2-methylpropionate--pyruvate transaminase</fullName>
        <ecNumber evidence="4">2.6.1.40</ecNumber>
    </alternativeName>
    <alternativeName>
        <fullName>Beta-ALAAT II</fullName>
    </alternativeName>
    <alternativeName>
        <fullName>Beta-alanine-pyruvate aminotransferase</fullName>
        <ecNumber evidence="3">2.6.1.18</ecNumber>
    </alternativeName>
    <alternativeName>
        <fullName evidence="3">D-3-aminoisobutyrate-pyruvate aminotransferase</fullName>
    </alternativeName>
    <alternativeName>
        <fullName evidence="3">D-AIBAT</fullName>
    </alternativeName>
    <alternativeName>
        <fullName evidence="3">D-beta-aminoisobutyrate-pyruvate aminotransferase</fullName>
    </alternativeName>
</protein>
<keyword id="KW-0007">Acetylation</keyword>
<keyword id="KW-0032">Aminotransferase</keyword>
<keyword id="KW-0496">Mitochondrion</keyword>
<keyword id="KW-0663">Pyridoxal phosphate</keyword>
<keyword id="KW-1185">Reference proteome</keyword>
<keyword id="KW-0808">Transferase</keyword>
<keyword id="KW-0809">Transit peptide</keyword>
<feature type="transit peptide" description="Mitochondrion" evidence="4">
    <location>
        <begin position="1"/>
        <end position="41"/>
    </location>
</feature>
<feature type="chain" id="PRO_0000041878" description="Alanine--glyoxylate aminotransferase 2, mitochondrial">
    <location>
        <begin position="42"/>
        <end position="514"/>
    </location>
</feature>
<feature type="modified residue" description="N6-acetyllysine; alternate" evidence="2">
    <location>
        <position position="71"/>
    </location>
</feature>
<feature type="modified residue" description="N6-succinyllysine; alternate" evidence="2">
    <location>
        <position position="71"/>
    </location>
</feature>
<feature type="modified residue" description="N6-acetyllysine" evidence="2">
    <location>
        <position position="84"/>
    </location>
</feature>
<feature type="modified residue" description="N6-acetyllysine; alternate" evidence="2">
    <location>
        <position position="262"/>
    </location>
</feature>
<feature type="modified residue" description="N6-succinyllysine; alternate" evidence="2">
    <location>
        <position position="262"/>
    </location>
</feature>
<feature type="modified residue" description="N6-succinyllysine" evidence="2">
    <location>
        <position position="304"/>
    </location>
</feature>
<feature type="modified residue" description="N6-(pyridoxal phosphate)lysine" evidence="1">
    <location>
        <position position="350"/>
    </location>
</feature>
<feature type="modified residue" description="N6-acetyllysine; alternate" evidence="2">
    <location>
        <position position="420"/>
    </location>
</feature>
<feature type="modified residue" description="N6-succinyllysine; alternate" evidence="2">
    <location>
        <position position="420"/>
    </location>
</feature>
<organism>
    <name type="scientific">Pongo abelii</name>
    <name type="common">Sumatran orangutan</name>
    <name type="synonym">Pongo pygmaeus abelii</name>
    <dbReference type="NCBI Taxonomy" id="9601"/>
    <lineage>
        <taxon>Eukaryota</taxon>
        <taxon>Metazoa</taxon>
        <taxon>Chordata</taxon>
        <taxon>Craniata</taxon>
        <taxon>Vertebrata</taxon>
        <taxon>Euteleostomi</taxon>
        <taxon>Mammalia</taxon>
        <taxon>Eutheria</taxon>
        <taxon>Euarchontoglires</taxon>
        <taxon>Primates</taxon>
        <taxon>Haplorrhini</taxon>
        <taxon>Catarrhini</taxon>
        <taxon>Hominidae</taxon>
        <taxon>Pongo</taxon>
    </lineage>
</organism>
<reference key="1">
    <citation type="submission" date="2004-11" db="EMBL/GenBank/DDBJ databases">
        <authorList>
            <consortium name="The German cDNA consortium"/>
        </authorList>
    </citation>
    <scope>NUCLEOTIDE SEQUENCE [LARGE SCALE MRNA]</scope>
    <source>
        <tissue>Kidney</tissue>
    </source>
</reference>
<accession>Q5RFA3</accession>
<proteinExistence type="evidence at transcript level"/>
<sequence>MTLIWRHLLRPLCLVTPAPRILEMRPFLNLGASWTSVTKLSLHTKPRMPPCDFMPERYQSLGYNRVLEIHKEHLSPVVTAYFQKPLLLHQGHMEWLFDAEGNRYLDFFSGIVTVSVGHCHPKVNAVAQKQLGRLWHTSTVFFHPPMHEYAEKLAALLPEPLKVIFLVNSGSEANELAMLMARAHSNNIDIISFRGAYHGCSPYTLGLTNIGTYKMELPGGTGCQPTMCPDVFRGPWGGSHCRDSPVQTIRKCSCAPDCCQAKDQYIEQFKDTLSTSVAKSIAGFFAEPIQGVNGVVQYPKGFLKEAFELVRARGGVCIADEVQTGFGRLGSHFRGFQTHDVLPDIVTMAKGIGNGFPMAAVVTTPEIAKSLVKRLQHFNTFGGNPMACAIGSAVLEVIKEENLQENSQEVGTYMLLQFAKLRDEFEIVGDVRGKGLMIGIEMVQDKISRRPLPREEVNQIHEDCKHMGLLVGRGSIFSQTFRIAPSMCITKPEVDFAVEVFRSALTQHMERRAK</sequence>
<evidence type="ECO:0000250" key="1"/>
<evidence type="ECO:0000250" key="2">
    <source>
        <dbReference type="UniProtKB" id="Q3UEG6"/>
    </source>
</evidence>
<evidence type="ECO:0000250" key="3">
    <source>
        <dbReference type="UniProtKB" id="Q64565"/>
    </source>
</evidence>
<evidence type="ECO:0000250" key="4">
    <source>
        <dbReference type="UniProtKB" id="Q9BYV1"/>
    </source>
</evidence>
<evidence type="ECO:0000305" key="5"/>
<comment type="function">
    <text evidence="3 4">Multifunctional aminotransferase with a broad substrate specificity. Catalyzes the conversion of glyoxylate to glycine using alanine as the amino donor. Catalyzes metabolism of not L- but the D-isomer of D-beta-aminoisobutyric acid to generate 2-methyl-3-oxopropanoate and alanine. Catalyzes the transfer of the amino group from beta-alanine to pyruvate to yield L-alanine and 3-oxopropanoate. Can metabolize NG-monomethyl-L-arginine (NMMA), asymmetric NG,NG-dimethyl-L-arginine (ADMA) and symmetric NG,N'G-dimethyl-L-arginine (SDMA). ADMA is a potent inhibitor of nitric-oxide (NO) synthase, and this activity provides mechanism through which the kidney regulates blood pressure.</text>
</comment>
<comment type="catalytic activity">
    <reaction evidence="3">
        <text>glyoxylate + L-alanine = glycine + pyruvate</text>
        <dbReference type="Rhea" id="RHEA:24248"/>
        <dbReference type="ChEBI" id="CHEBI:15361"/>
        <dbReference type="ChEBI" id="CHEBI:36655"/>
        <dbReference type="ChEBI" id="CHEBI:57305"/>
        <dbReference type="ChEBI" id="CHEBI:57972"/>
        <dbReference type="EC" id="2.6.1.44"/>
    </reaction>
    <physiologicalReaction direction="left-to-right" evidence="3">
        <dbReference type="Rhea" id="RHEA:24249"/>
    </physiologicalReaction>
</comment>
<comment type="catalytic activity">
    <reaction evidence="4">
        <text>(R)-3-amino-2-methylpropanoate + pyruvate = 2-methyl-3-oxopropanoate + L-alanine</text>
        <dbReference type="Rhea" id="RHEA:18393"/>
        <dbReference type="ChEBI" id="CHEBI:15361"/>
        <dbReference type="ChEBI" id="CHEBI:57700"/>
        <dbReference type="ChEBI" id="CHEBI:57731"/>
        <dbReference type="ChEBI" id="CHEBI:57972"/>
        <dbReference type="EC" id="2.6.1.40"/>
    </reaction>
    <physiologicalReaction direction="left-to-right" evidence="4">
        <dbReference type="Rhea" id="RHEA:18394"/>
    </physiologicalReaction>
</comment>
<comment type="catalytic activity">
    <reaction evidence="3">
        <text>3-oxopropanoate + L-alanine = beta-alanine + pyruvate</text>
        <dbReference type="Rhea" id="RHEA:14077"/>
        <dbReference type="ChEBI" id="CHEBI:15361"/>
        <dbReference type="ChEBI" id="CHEBI:33190"/>
        <dbReference type="ChEBI" id="CHEBI:57966"/>
        <dbReference type="ChEBI" id="CHEBI:57972"/>
        <dbReference type="EC" id="2.6.1.18"/>
    </reaction>
    <physiologicalReaction direction="right-to-left" evidence="3">
        <dbReference type="Rhea" id="RHEA:14079"/>
    </physiologicalReaction>
</comment>
<comment type="catalytic activity">
    <reaction evidence="3">
        <text>2-oxobutanoate + L-alanine = (2S)-2-aminobutanoate + pyruvate</text>
        <dbReference type="Rhea" id="RHEA:77355"/>
        <dbReference type="ChEBI" id="CHEBI:15361"/>
        <dbReference type="ChEBI" id="CHEBI:16763"/>
        <dbReference type="ChEBI" id="CHEBI:57972"/>
        <dbReference type="ChEBI" id="CHEBI:74359"/>
        <dbReference type="EC" id="2.6.1.44"/>
    </reaction>
</comment>
<comment type="catalytic activity">
    <reaction evidence="3">
        <text>N(omega),N(omega)-dimethyl-L-arginine + pyruvate = 5-(3,3-dimethylguanidino)-2-oxopentanoate + L-alanine</text>
        <dbReference type="Rhea" id="RHEA:77303"/>
        <dbReference type="ChEBI" id="CHEBI:15361"/>
        <dbReference type="ChEBI" id="CHEBI:57972"/>
        <dbReference type="ChEBI" id="CHEBI:58326"/>
        <dbReference type="ChEBI" id="CHEBI:197301"/>
    </reaction>
</comment>
<comment type="catalytic activity">
    <reaction evidence="3">
        <text>N(omega),N('omega)-dimethyl-L-arginine + pyruvate = 5-(3,3'-dimethylguanidino)-2-oxopentanoate + L-alanine</text>
        <dbReference type="Rhea" id="RHEA:77307"/>
        <dbReference type="ChEBI" id="CHEBI:15361"/>
        <dbReference type="ChEBI" id="CHEBI:57972"/>
        <dbReference type="ChEBI" id="CHEBI:197308"/>
        <dbReference type="ChEBI" id="CHEBI:197310"/>
    </reaction>
</comment>
<comment type="catalytic activity">
    <reaction evidence="3">
        <text>N(omega),N(omega)-dimethyl-L-arginine + glyoxylate = 5-(3,3-dimethylguanidino)-2-oxopentanoate + glycine</text>
        <dbReference type="Rhea" id="RHEA:77311"/>
        <dbReference type="ChEBI" id="CHEBI:36655"/>
        <dbReference type="ChEBI" id="CHEBI:57305"/>
        <dbReference type="ChEBI" id="CHEBI:58326"/>
        <dbReference type="ChEBI" id="CHEBI:197301"/>
    </reaction>
</comment>
<comment type="catalytic activity">
    <reaction evidence="3">
        <text>N(omega),N('omega)-dimethyl-L-arginine + glyoxylate = 5-(3,3'-dimethylguanidino)-2-oxopentanoate + glycine</text>
        <dbReference type="Rhea" id="RHEA:77315"/>
        <dbReference type="ChEBI" id="CHEBI:36655"/>
        <dbReference type="ChEBI" id="CHEBI:57305"/>
        <dbReference type="ChEBI" id="CHEBI:197308"/>
        <dbReference type="ChEBI" id="CHEBI:197310"/>
    </reaction>
</comment>
<comment type="catalytic activity">
    <reaction evidence="3">
        <text>N(omega)-methyl-L-arginine + pyruvate = 5-(3-methylguanidino)-2-oxopentanoate + L-alanine</text>
        <dbReference type="Rhea" id="RHEA:77319"/>
        <dbReference type="ChEBI" id="CHEBI:15361"/>
        <dbReference type="ChEBI" id="CHEBI:57972"/>
        <dbReference type="ChEBI" id="CHEBI:114953"/>
        <dbReference type="ChEBI" id="CHEBI:197314"/>
    </reaction>
</comment>
<comment type="catalytic activity">
    <reaction evidence="3">
        <text>N(omega)-methyl-L-arginine + glyoxylate = 5-(3-methylguanidino)-2-oxopentanoate + glycine</text>
        <dbReference type="Rhea" id="RHEA:77323"/>
        <dbReference type="ChEBI" id="CHEBI:36655"/>
        <dbReference type="ChEBI" id="CHEBI:57305"/>
        <dbReference type="ChEBI" id="CHEBI:114953"/>
        <dbReference type="ChEBI" id="CHEBI:197314"/>
    </reaction>
</comment>
<comment type="catalytic activity">
    <reaction evidence="3">
        <text>L-ornithine + pyruvate = 5-amino-2-oxopentanoate + L-alanine</text>
        <dbReference type="Rhea" id="RHEA:77327"/>
        <dbReference type="ChEBI" id="CHEBI:15361"/>
        <dbReference type="ChEBI" id="CHEBI:46911"/>
        <dbReference type="ChEBI" id="CHEBI:57972"/>
        <dbReference type="ChEBI" id="CHEBI:58802"/>
    </reaction>
</comment>
<comment type="catalytic activity">
    <reaction evidence="3">
        <text>L-ornithine + glyoxylate = 5-amino-2-oxopentanoate + glycine</text>
        <dbReference type="Rhea" id="RHEA:77331"/>
        <dbReference type="ChEBI" id="CHEBI:36655"/>
        <dbReference type="ChEBI" id="CHEBI:46911"/>
        <dbReference type="ChEBI" id="CHEBI:57305"/>
        <dbReference type="ChEBI" id="CHEBI:58802"/>
    </reaction>
</comment>
<comment type="catalytic activity">
    <reaction evidence="3">
        <text>(2S)-2-aminobutanoate + glyoxylate = 2-oxobutanoate + glycine</text>
        <dbReference type="Rhea" id="RHEA:77339"/>
        <dbReference type="ChEBI" id="CHEBI:16763"/>
        <dbReference type="ChEBI" id="CHEBI:36655"/>
        <dbReference type="ChEBI" id="CHEBI:57305"/>
        <dbReference type="ChEBI" id="CHEBI:74359"/>
    </reaction>
</comment>
<comment type="catalytic activity">
    <reaction evidence="3">
        <text>N(omega),N(omega)-dimethyl-L-arginine + oxaloacetate = 5-(3,3-dimethylguanidino)-2-oxopentanoate + L-aspartate</text>
        <dbReference type="Rhea" id="RHEA:77343"/>
        <dbReference type="ChEBI" id="CHEBI:16452"/>
        <dbReference type="ChEBI" id="CHEBI:29991"/>
        <dbReference type="ChEBI" id="CHEBI:58326"/>
        <dbReference type="ChEBI" id="CHEBI:197301"/>
    </reaction>
</comment>
<comment type="catalytic activity">
    <reaction evidence="3">
        <text>oxaloacetate + L-alanine = L-aspartate + pyruvate</text>
        <dbReference type="Rhea" id="RHEA:77347"/>
        <dbReference type="ChEBI" id="CHEBI:15361"/>
        <dbReference type="ChEBI" id="CHEBI:16452"/>
        <dbReference type="ChEBI" id="CHEBI:29991"/>
        <dbReference type="ChEBI" id="CHEBI:57972"/>
    </reaction>
</comment>
<comment type="catalytic activity">
    <reaction evidence="3">
        <text>N(omega),N(omega)-dimethyl-L-arginine + 2-oxobutanoate = 5-(3,3-dimethylguanidino)-2-oxopentanoate + (2S)-2-aminobutanoate</text>
        <dbReference type="Rhea" id="RHEA:77351"/>
        <dbReference type="ChEBI" id="CHEBI:16763"/>
        <dbReference type="ChEBI" id="CHEBI:58326"/>
        <dbReference type="ChEBI" id="CHEBI:74359"/>
        <dbReference type="ChEBI" id="CHEBI:197301"/>
    </reaction>
</comment>
<comment type="catalytic activity">
    <reaction evidence="3">
        <text>2-oxopentanoate + N(omega),N(omega)-dimethyl-L-arginine = 5-(3,3-dimethylguanidino)-2-oxopentanoate + L-2-aminopentanoate</text>
        <dbReference type="Rhea" id="RHEA:77359"/>
        <dbReference type="ChEBI" id="CHEBI:28644"/>
        <dbReference type="ChEBI" id="CHEBI:58326"/>
        <dbReference type="ChEBI" id="CHEBI:58441"/>
        <dbReference type="ChEBI" id="CHEBI:197301"/>
    </reaction>
</comment>
<comment type="catalytic activity">
    <reaction evidence="3">
        <text>2-oxohexanoate + N(omega),N(omega)-dimethyl-L-arginine = L-2-aminohexanoate + 5-(3,3-dimethylguanidino)-2-oxopentanoate</text>
        <dbReference type="Rhea" id="RHEA:77363"/>
        <dbReference type="ChEBI" id="CHEBI:35177"/>
        <dbReference type="ChEBI" id="CHEBI:58326"/>
        <dbReference type="ChEBI" id="CHEBI:58455"/>
        <dbReference type="ChEBI" id="CHEBI:197301"/>
    </reaction>
</comment>
<comment type="cofactor">
    <cofactor evidence="3">
        <name>pyridoxal 5'-phosphate</name>
        <dbReference type="ChEBI" id="CHEBI:597326"/>
    </cofactor>
</comment>
<comment type="subunit">
    <text evidence="3">Homotetramer.</text>
</comment>
<comment type="subcellular location">
    <subcellularLocation>
        <location evidence="4">Mitochondrion</location>
    </subcellularLocation>
</comment>
<comment type="similarity">
    <text evidence="5">Belongs to the class-III pyridoxal-phosphate-dependent aminotransferase family.</text>
</comment>
<gene>
    <name type="primary">AGXT2</name>
</gene>